<accession>B9JV75</accession>
<protein>
    <recommendedName>
        <fullName evidence="1">Transcriptional repressor NrdR</fullName>
    </recommendedName>
</protein>
<name>NRDR_ALLAM</name>
<feature type="chain" id="PRO_1000191773" description="Transcriptional repressor NrdR">
    <location>
        <begin position="1"/>
        <end position="158"/>
    </location>
</feature>
<feature type="domain" description="ATP-cone" evidence="1">
    <location>
        <begin position="49"/>
        <end position="139"/>
    </location>
</feature>
<feature type="zinc finger region" evidence="1">
    <location>
        <begin position="3"/>
        <end position="34"/>
    </location>
</feature>
<feature type="region of interest" description="Disordered" evidence="2">
    <location>
        <begin position="1"/>
        <end position="22"/>
    </location>
</feature>
<feature type="compositionally biased region" description="Basic and acidic residues" evidence="2">
    <location>
        <begin position="11"/>
        <end position="22"/>
    </location>
</feature>
<reference key="1">
    <citation type="journal article" date="2009" name="J. Bacteriol.">
        <title>Genome sequences of three Agrobacterium biovars help elucidate the evolution of multichromosome genomes in bacteria.</title>
        <authorList>
            <person name="Slater S.C."/>
            <person name="Goldman B.S."/>
            <person name="Goodner B."/>
            <person name="Setubal J.C."/>
            <person name="Farrand S.K."/>
            <person name="Nester E.W."/>
            <person name="Burr T.J."/>
            <person name="Banta L."/>
            <person name="Dickerman A.W."/>
            <person name="Paulsen I."/>
            <person name="Otten L."/>
            <person name="Suen G."/>
            <person name="Welch R."/>
            <person name="Almeida N.F."/>
            <person name="Arnold F."/>
            <person name="Burton O.T."/>
            <person name="Du Z."/>
            <person name="Ewing A."/>
            <person name="Godsy E."/>
            <person name="Heisel S."/>
            <person name="Houmiel K.L."/>
            <person name="Jhaveri J."/>
            <person name="Lu J."/>
            <person name="Miller N.M."/>
            <person name="Norton S."/>
            <person name="Chen Q."/>
            <person name="Phoolcharoen W."/>
            <person name="Ohlin V."/>
            <person name="Ondrusek D."/>
            <person name="Pride N."/>
            <person name="Stricklin S.L."/>
            <person name="Sun J."/>
            <person name="Wheeler C."/>
            <person name="Wilson L."/>
            <person name="Zhu H."/>
            <person name="Wood D.W."/>
        </authorList>
    </citation>
    <scope>NUCLEOTIDE SEQUENCE [LARGE SCALE GENOMIC DNA]</scope>
    <source>
        <strain>ATCC BAA-846 / DSM 112012 / S4</strain>
    </source>
</reference>
<organism>
    <name type="scientific">Allorhizobium ampelinum (strain ATCC BAA-846 / DSM 112012 / S4)</name>
    <name type="common">Agrobacterium vitis (strain S4)</name>
    <dbReference type="NCBI Taxonomy" id="311402"/>
    <lineage>
        <taxon>Bacteria</taxon>
        <taxon>Pseudomonadati</taxon>
        <taxon>Pseudomonadota</taxon>
        <taxon>Alphaproteobacteria</taxon>
        <taxon>Hyphomicrobiales</taxon>
        <taxon>Rhizobiaceae</taxon>
        <taxon>Rhizobium/Agrobacterium group</taxon>
        <taxon>Allorhizobium</taxon>
        <taxon>Allorhizobium ampelinum</taxon>
    </lineage>
</organism>
<proteinExistence type="inferred from homology"/>
<comment type="function">
    <text evidence="1">Negatively regulates transcription of bacterial ribonucleotide reductase nrd genes and operons by binding to NrdR-boxes.</text>
</comment>
<comment type="cofactor">
    <cofactor evidence="1">
        <name>Zn(2+)</name>
        <dbReference type="ChEBI" id="CHEBI:29105"/>
    </cofactor>
    <text evidence="1">Binds 1 zinc ion.</text>
</comment>
<comment type="similarity">
    <text evidence="1">Belongs to the NrdR family.</text>
</comment>
<evidence type="ECO:0000255" key="1">
    <source>
        <dbReference type="HAMAP-Rule" id="MF_00440"/>
    </source>
</evidence>
<evidence type="ECO:0000256" key="2">
    <source>
        <dbReference type="SAM" id="MobiDB-lite"/>
    </source>
</evidence>
<keyword id="KW-0067">ATP-binding</keyword>
<keyword id="KW-0238">DNA-binding</keyword>
<keyword id="KW-0479">Metal-binding</keyword>
<keyword id="KW-0547">Nucleotide-binding</keyword>
<keyword id="KW-1185">Reference proteome</keyword>
<keyword id="KW-0678">Repressor</keyword>
<keyword id="KW-0804">Transcription</keyword>
<keyword id="KW-0805">Transcription regulation</keyword>
<keyword id="KW-0862">Zinc</keyword>
<keyword id="KW-0863">Zinc-finger</keyword>
<dbReference type="EMBL" id="CP000633">
    <property type="protein sequence ID" value="ACM36155.1"/>
    <property type="molecule type" value="Genomic_DNA"/>
</dbReference>
<dbReference type="RefSeq" id="WP_015915579.1">
    <property type="nucleotide sequence ID" value="NC_011989.1"/>
</dbReference>
<dbReference type="SMR" id="B9JV75"/>
<dbReference type="STRING" id="311402.Avi_1612"/>
<dbReference type="GeneID" id="60682246"/>
<dbReference type="KEGG" id="avi:Avi_1612"/>
<dbReference type="eggNOG" id="COG1327">
    <property type="taxonomic scope" value="Bacteria"/>
</dbReference>
<dbReference type="HOGENOM" id="CLU_108412_0_1_5"/>
<dbReference type="Proteomes" id="UP000001596">
    <property type="component" value="Chromosome 1"/>
</dbReference>
<dbReference type="GO" id="GO:0005524">
    <property type="term" value="F:ATP binding"/>
    <property type="evidence" value="ECO:0007669"/>
    <property type="project" value="UniProtKB-KW"/>
</dbReference>
<dbReference type="GO" id="GO:0003677">
    <property type="term" value="F:DNA binding"/>
    <property type="evidence" value="ECO:0007669"/>
    <property type="project" value="UniProtKB-KW"/>
</dbReference>
<dbReference type="GO" id="GO:0008270">
    <property type="term" value="F:zinc ion binding"/>
    <property type="evidence" value="ECO:0007669"/>
    <property type="project" value="UniProtKB-UniRule"/>
</dbReference>
<dbReference type="GO" id="GO:0045892">
    <property type="term" value="P:negative regulation of DNA-templated transcription"/>
    <property type="evidence" value="ECO:0007669"/>
    <property type="project" value="UniProtKB-UniRule"/>
</dbReference>
<dbReference type="HAMAP" id="MF_00440">
    <property type="entry name" value="NrdR"/>
    <property type="match status" value="1"/>
</dbReference>
<dbReference type="InterPro" id="IPR005144">
    <property type="entry name" value="ATP-cone_dom"/>
</dbReference>
<dbReference type="InterPro" id="IPR055173">
    <property type="entry name" value="NrdR-like_N"/>
</dbReference>
<dbReference type="InterPro" id="IPR003796">
    <property type="entry name" value="RNR_NrdR-like"/>
</dbReference>
<dbReference type="NCBIfam" id="TIGR00244">
    <property type="entry name" value="transcriptional regulator NrdR"/>
    <property type="match status" value="1"/>
</dbReference>
<dbReference type="PANTHER" id="PTHR30455">
    <property type="entry name" value="TRANSCRIPTIONAL REPRESSOR NRDR"/>
    <property type="match status" value="1"/>
</dbReference>
<dbReference type="PANTHER" id="PTHR30455:SF2">
    <property type="entry name" value="TRANSCRIPTIONAL REPRESSOR NRDR"/>
    <property type="match status" value="1"/>
</dbReference>
<dbReference type="Pfam" id="PF03477">
    <property type="entry name" value="ATP-cone"/>
    <property type="match status" value="1"/>
</dbReference>
<dbReference type="Pfam" id="PF22811">
    <property type="entry name" value="Zn_ribbon_NrdR"/>
    <property type="match status" value="1"/>
</dbReference>
<dbReference type="PROSITE" id="PS51161">
    <property type="entry name" value="ATP_CONE"/>
    <property type="match status" value="1"/>
</dbReference>
<sequence>MRCPFCGSDDTQVKDSRPAEDNSAIRRRRICPDCGGRFTTFERVQLRELTVLKKTGRKAPFDRNKLVRSFEIALRKRPVDRDRIERAVSGIVRRLESSGETEISSEQIGLQVLEALKSLDDVAFVRYASVYRDFSHAEDFEQVISEITAKISQDHEPG</sequence>
<gene>
    <name evidence="1" type="primary">nrdR</name>
    <name type="ordered locus">Avi_1612</name>
</gene>